<organism>
    <name type="scientific">Arabidopsis thaliana</name>
    <name type="common">Mouse-ear cress</name>
    <dbReference type="NCBI Taxonomy" id="3702"/>
    <lineage>
        <taxon>Eukaryota</taxon>
        <taxon>Viridiplantae</taxon>
        <taxon>Streptophyta</taxon>
        <taxon>Embryophyta</taxon>
        <taxon>Tracheophyta</taxon>
        <taxon>Spermatophyta</taxon>
        <taxon>Magnoliopsida</taxon>
        <taxon>eudicotyledons</taxon>
        <taxon>Gunneridae</taxon>
        <taxon>Pentapetalae</taxon>
        <taxon>rosids</taxon>
        <taxon>malvids</taxon>
        <taxon>Brassicales</taxon>
        <taxon>Brassicaceae</taxon>
        <taxon>Camelineae</taxon>
        <taxon>Arabidopsis</taxon>
    </lineage>
</organism>
<comment type="cofactor">
    <cofactor evidence="1">
        <name>FAD</name>
        <dbReference type="ChEBI" id="CHEBI:57692"/>
    </cofactor>
    <text evidence="1">Binds 1 FAD per subunit in a bicovalent manner.</text>
</comment>
<comment type="subcellular location">
    <subcellularLocation>
        <location evidence="1">Secreted</location>
        <location evidence="1">Cell wall</location>
    </subcellularLocation>
</comment>
<comment type="PTM">
    <text evidence="1">The FAD cofactor is bound via a bicovalent 6-S-cysteinyl, 8alpha-N1-histidyl FAD linkage.</text>
</comment>
<comment type="similarity">
    <text evidence="6">Belongs to the oxygen-dependent FAD-linked oxidoreductase family.</text>
</comment>
<comment type="sequence caution" evidence="6">
    <conflict type="erroneous initiation">
        <sequence resource="EMBL-CDS" id="BAC42794"/>
    </conflict>
    <text>Truncated N-terminus.</text>
</comment>
<gene>
    <name evidence="7" type="ordered locus">At1g11770</name>
    <name evidence="8" type="ORF">F25C20.7</name>
</gene>
<accession>Q9SA99</accession>
<accession>B3LF50</accession>
<accession>Q8GXL5</accession>
<sequence length="536" mass="59794">MKIFCLILFLISSFISTSLAVEPPPETIYQNFLQCFTNQTKAPPNSLADVVLPKTAAAFTPVLRAYIRNARFNTTATPKPAIVIAARSESHVQAAVICTKSLNIQLKTRSGGHDYEGVSYISHVPFFVLDMSNLRNITVDPATESAWVGAGATLGEVYYRIWEKTKSHGFPAGVCPTVGAGGHISGGGYGNMIRKYGLSVDYVTDAKIVDVNGQVLDRKGMGEDMFWAINGGGGASFGVILAFKIKLVPVPPTVTVFRVEKNLVENATEMVHKWQFVAPKTDPGLFMRLLLQPVTRNKMQTVRASVVALFLGDQNTVMSMLTKEFPELGLKKENCTEMTWIQSVMWWANNDNATQIKPEILLDRNPDMATFGKRKSDFVEKEITKDGLDFLFKKMIEVGKIGLVFNPYGGIMSTVATTKTPFPHRKKLYKIQHSMNWKDPGTEAETSFLQKAKSFYSYMAPFVTKNPRHTYINYRDLDIGVNTPGPNSYRVAEVFGRMYFGENFDRLVKVKTAVDPQNFFRDEQSIPTLPGKPARR</sequence>
<reference key="1">
    <citation type="journal article" date="2000" name="Nature">
        <title>Sequence and analysis of chromosome 1 of the plant Arabidopsis thaliana.</title>
        <authorList>
            <person name="Theologis A."/>
            <person name="Ecker J.R."/>
            <person name="Palm C.J."/>
            <person name="Federspiel N.A."/>
            <person name="Kaul S."/>
            <person name="White O."/>
            <person name="Alonso J."/>
            <person name="Altafi H."/>
            <person name="Araujo R."/>
            <person name="Bowman C.L."/>
            <person name="Brooks S.Y."/>
            <person name="Buehler E."/>
            <person name="Chan A."/>
            <person name="Chao Q."/>
            <person name="Chen H."/>
            <person name="Cheuk R.F."/>
            <person name="Chin C.W."/>
            <person name="Chung M.K."/>
            <person name="Conn L."/>
            <person name="Conway A.B."/>
            <person name="Conway A.R."/>
            <person name="Creasy T.H."/>
            <person name="Dewar K."/>
            <person name="Dunn P."/>
            <person name="Etgu P."/>
            <person name="Feldblyum T.V."/>
            <person name="Feng J.-D."/>
            <person name="Fong B."/>
            <person name="Fujii C.Y."/>
            <person name="Gill J.E."/>
            <person name="Goldsmith A.D."/>
            <person name="Haas B."/>
            <person name="Hansen N.F."/>
            <person name="Hughes B."/>
            <person name="Huizar L."/>
            <person name="Hunter J.L."/>
            <person name="Jenkins J."/>
            <person name="Johnson-Hopson C."/>
            <person name="Khan S."/>
            <person name="Khaykin E."/>
            <person name="Kim C.J."/>
            <person name="Koo H.L."/>
            <person name="Kremenetskaia I."/>
            <person name="Kurtz D.B."/>
            <person name="Kwan A."/>
            <person name="Lam B."/>
            <person name="Langin-Hooper S."/>
            <person name="Lee A."/>
            <person name="Lee J.M."/>
            <person name="Lenz C.A."/>
            <person name="Li J.H."/>
            <person name="Li Y.-P."/>
            <person name="Lin X."/>
            <person name="Liu S.X."/>
            <person name="Liu Z.A."/>
            <person name="Luros J.S."/>
            <person name="Maiti R."/>
            <person name="Marziali A."/>
            <person name="Militscher J."/>
            <person name="Miranda M."/>
            <person name="Nguyen M."/>
            <person name="Nierman W.C."/>
            <person name="Osborne B.I."/>
            <person name="Pai G."/>
            <person name="Peterson J."/>
            <person name="Pham P.K."/>
            <person name="Rizzo M."/>
            <person name="Rooney T."/>
            <person name="Rowley D."/>
            <person name="Sakano H."/>
            <person name="Salzberg S.L."/>
            <person name="Schwartz J.R."/>
            <person name="Shinn P."/>
            <person name="Southwick A.M."/>
            <person name="Sun H."/>
            <person name="Tallon L.J."/>
            <person name="Tambunga G."/>
            <person name="Toriumi M.J."/>
            <person name="Town C.D."/>
            <person name="Utterback T."/>
            <person name="Van Aken S."/>
            <person name="Vaysberg M."/>
            <person name="Vysotskaia V.S."/>
            <person name="Walker M."/>
            <person name="Wu D."/>
            <person name="Yu G."/>
            <person name="Fraser C.M."/>
            <person name="Venter J.C."/>
            <person name="Davis R.W."/>
        </authorList>
    </citation>
    <scope>NUCLEOTIDE SEQUENCE [LARGE SCALE GENOMIC DNA]</scope>
    <source>
        <strain>cv. Columbia</strain>
    </source>
</reference>
<reference key="2">
    <citation type="journal article" date="2017" name="Plant J.">
        <title>Araport11: a complete reannotation of the Arabidopsis thaliana reference genome.</title>
        <authorList>
            <person name="Cheng C.Y."/>
            <person name="Krishnakumar V."/>
            <person name="Chan A.P."/>
            <person name="Thibaud-Nissen F."/>
            <person name="Schobel S."/>
            <person name="Town C.D."/>
        </authorList>
    </citation>
    <scope>GENOME REANNOTATION</scope>
    <source>
        <strain>cv. Columbia</strain>
    </source>
</reference>
<reference key="3">
    <citation type="journal article" date="2002" name="Science">
        <title>Functional annotation of a full-length Arabidopsis cDNA collection.</title>
        <authorList>
            <person name="Seki M."/>
            <person name="Narusaka M."/>
            <person name="Kamiya A."/>
            <person name="Ishida J."/>
            <person name="Satou M."/>
            <person name="Sakurai T."/>
            <person name="Nakajima M."/>
            <person name="Enju A."/>
            <person name="Akiyama K."/>
            <person name="Oono Y."/>
            <person name="Muramatsu M."/>
            <person name="Hayashizaki Y."/>
            <person name="Kawai J."/>
            <person name="Carninci P."/>
            <person name="Itoh M."/>
            <person name="Ishii Y."/>
            <person name="Arakawa T."/>
            <person name="Shibata K."/>
            <person name="Shinagawa A."/>
            <person name="Shinozaki K."/>
        </authorList>
    </citation>
    <scope>NUCLEOTIDE SEQUENCE [LARGE SCALE MRNA] OF 388-536</scope>
    <source>
        <strain>cv. Columbia</strain>
    </source>
</reference>
<reference key="4">
    <citation type="submission" date="2008-06" db="EMBL/GenBank/DDBJ databases">
        <title>Arabidopsis ORF clones.</title>
        <authorList>
            <person name="de los Reyes C."/>
            <person name="Quan R."/>
            <person name="Chen H."/>
            <person name="Bautista V."/>
            <person name="Kim C.J."/>
            <person name="Ecker J.R."/>
        </authorList>
    </citation>
    <scope>NUCLEOTIDE SEQUENCE [LARGE SCALE MRNA] OF 131-536</scope>
    <source>
        <strain>cv. Columbia</strain>
    </source>
</reference>
<reference key="5">
    <citation type="journal article" date="2015" name="J. Biol. Chem.">
        <title>Oxidation of monolignols by members of the berberine bridge enzyme family suggests a role in plant cell wall metabolism.</title>
        <authorList>
            <person name="Daniel B."/>
            <person name="Pavkov-Keller T."/>
            <person name="Steiner B."/>
            <person name="Dordic A."/>
            <person name="Gutmann A."/>
            <person name="Nidetzky B."/>
            <person name="Sensen C.W."/>
            <person name="van der Graaff E."/>
            <person name="Wallner S."/>
            <person name="Gruber K."/>
            <person name="Macheroux P."/>
        </authorList>
    </citation>
    <scope>GENE FAMILY</scope>
    <scope>NOMENCLATURE</scope>
</reference>
<evidence type="ECO:0000250" key="1">
    <source>
        <dbReference type="UniProtKB" id="O64743"/>
    </source>
</evidence>
<evidence type="ECO:0000255" key="2"/>
<evidence type="ECO:0000255" key="3">
    <source>
        <dbReference type="PROSITE-ProRule" id="PRU00498"/>
    </source>
</evidence>
<evidence type="ECO:0000255" key="4">
    <source>
        <dbReference type="PROSITE-ProRule" id="PRU00718"/>
    </source>
</evidence>
<evidence type="ECO:0000303" key="5">
    <source>
    </source>
</evidence>
<evidence type="ECO:0000305" key="6"/>
<evidence type="ECO:0000312" key="7">
    <source>
        <dbReference type="Araport" id="AT1G11770"/>
    </source>
</evidence>
<evidence type="ECO:0000312" key="8">
    <source>
        <dbReference type="EMBL" id="AAD30246.1"/>
    </source>
</evidence>
<proteinExistence type="evidence at transcript level"/>
<protein>
    <recommendedName>
        <fullName evidence="5">Berberine bridge enzyme-like 2</fullName>
        <shortName evidence="5">AtBBE-like 2</shortName>
        <ecNumber evidence="1">1.1.1.-</ecNumber>
    </recommendedName>
</protein>
<dbReference type="EC" id="1.1.1.-" evidence="1"/>
<dbReference type="EMBL" id="AC007296">
    <property type="protein sequence ID" value="AAD30246.1"/>
    <property type="molecule type" value="Genomic_DNA"/>
</dbReference>
<dbReference type="EMBL" id="CP002684">
    <property type="protein sequence ID" value="AEE28783.1"/>
    <property type="molecule type" value="Genomic_DNA"/>
</dbReference>
<dbReference type="EMBL" id="AK118171">
    <property type="protein sequence ID" value="BAC42794.1"/>
    <property type="status" value="ALT_INIT"/>
    <property type="molecule type" value="mRNA"/>
</dbReference>
<dbReference type="EMBL" id="BT033038">
    <property type="protein sequence ID" value="ACE79740.1"/>
    <property type="molecule type" value="mRNA"/>
</dbReference>
<dbReference type="PIR" id="F86251">
    <property type="entry name" value="F86251"/>
</dbReference>
<dbReference type="RefSeq" id="NP_172642.3">
    <property type="nucleotide sequence ID" value="NM_101049.3"/>
</dbReference>
<dbReference type="SMR" id="Q9SA99"/>
<dbReference type="FunCoup" id="Q9SA99">
    <property type="interactions" value="16"/>
</dbReference>
<dbReference type="STRING" id="3702.Q9SA99"/>
<dbReference type="GlyGen" id="Q9SA99">
    <property type="glycosylation" value="8 sites"/>
</dbReference>
<dbReference type="PaxDb" id="3702-AT1G11770.1"/>
<dbReference type="ProteomicsDB" id="240850"/>
<dbReference type="EnsemblPlants" id="AT1G11770.1">
    <property type="protein sequence ID" value="AT1G11770.1"/>
    <property type="gene ID" value="AT1G11770"/>
</dbReference>
<dbReference type="GeneID" id="837722"/>
<dbReference type="Gramene" id="AT1G11770.1">
    <property type="protein sequence ID" value="AT1G11770.1"/>
    <property type="gene ID" value="AT1G11770"/>
</dbReference>
<dbReference type="KEGG" id="ath:AT1G11770"/>
<dbReference type="Araport" id="AT1G11770"/>
<dbReference type="TAIR" id="AT1G11770">
    <property type="gene designation" value="ATBBE2"/>
</dbReference>
<dbReference type="eggNOG" id="ENOG502QVGN">
    <property type="taxonomic scope" value="Eukaryota"/>
</dbReference>
<dbReference type="HOGENOM" id="CLU_018354_6_0_1"/>
<dbReference type="InParanoid" id="Q9SA99"/>
<dbReference type="OMA" id="FLQCFTN"/>
<dbReference type="PhylomeDB" id="Q9SA99"/>
<dbReference type="BioCyc" id="ARA:AT1G11770-MONOMER"/>
<dbReference type="PRO" id="PR:Q9SA99"/>
<dbReference type="Proteomes" id="UP000006548">
    <property type="component" value="Chromosome 1"/>
</dbReference>
<dbReference type="ExpressionAtlas" id="Q9SA99">
    <property type="expression patterns" value="baseline and differential"/>
</dbReference>
<dbReference type="GO" id="GO:0005576">
    <property type="term" value="C:extracellular region"/>
    <property type="evidence" value="ECO:0007669"/>
    <property type="project" value="UniProtKB-KW"/>
</dbReference>
<dbReference type="GO" id="GO:0009505">
    <property type="term" value="C:plant-type cell wall"/>
    <property type="evidence" value="ECO:0000250"/>
    <property type="project" value="UniProtKB"/>
</dbReference>
<dbReference type="GO" id="GO:0071949">
    <property type="term" value="F:FAD binding"/>
    <property type="evidence" value="ECO:0007669"/>
    <property type="project" value="InterPro"/>
</dbReference>
<dbReference type="GO" id="GO:0016899">
    <property type="term" value="F:oxidoreductase activity, acting on the CH-OH group of donors, oxygen as acceptor"/>
    <property type="evidence" value="ECO:0000314"/>
    <property type="project" value="TAIR"/>
</dbReference>
<dbReference type="FunFam" id="3.30.43.10:FF:000004">
    <property type="entry name" value="Berberine bridge enzyme-like 15"/>
    <property type="match status" value="1"/>
</dbReference>
<dbReference type="Gene3D" id="3.30.465.10">
    <property type="match status" value="1"/>
</dbReference>
<dbReference type="Gene3D" id="3.40.462.20">
    <property type="match status" value="1"/>
</dbReference>
<dbReference type="Gene3D" id="3.30.43.10">
    <property type="entry name" value="Uridine Diphospho-n-acetylenolpyruvylglucosamine Reductase, domain 2"/>
    <property type="match status" value="1"/>
</dbReference>
<dbReference type="InterPro" id="IPR012951">
    <property type="entry name" value="BBE"/>
</dbReference>
<dbReference type="InterPro" id="IPR016166">
    <property type="entry name" value="FAD-bd_PCMH"/>
</dbReference>
<dbReference type="InterPro" id="IPR036318">
    <property type="entry name" value="FAD-bd_PCMH-like_sf"/>
</dbReference>
<dbReference type="InterPro" id="IPR016167">
    <property type="entry name" value="FAD-bd_PCMH_sub1"/>
</dbReference>
<dbReference type="InterPro" id="IPR016169">
    <property type="entry name" value="FAD-bd_PCMH_sub2"/>
</dbReference>
<dbReference type="InterPro" id="IPR006094">
    <property type="entry name" value="Oxid_FAD_bind_N"/>
</dbReference>
<dbReference type="PANTHER" id="PTHR32448">
    <property type="entry name" value="OS08G0158400 PROTEIN"/>
    <property type="match status" value="1"/>
</dbReference>
<dbReference type="Pfam" id="PF08031">
    <property type="entry name" value="BBE"/>
    <property type="match status" value="1"/>
</dbReference>
<dbReference type="Pfam" id="PF01565">
    <property type="entry name" value="FAD_binding_4"/>
    <property type="match status" value="1"/>
</dbReference>
<dbReference type="SUPFAM" id="SSF56176">
    <property type="entry name" value="FAD-binding/transporter-associated domain-like"/>
    <property type="match status" value="1"/>
</dbReference>
<dbReference type="PROSITE" id="PS51387">
    <property type="entry name" value="FAD_PCMH"/>
    <property type="match status" value="1"/>
</dbReference>
<name>BBE2_ARATH</name>
<keyword id="KW-0134">Cell wall</keyword>
<keyword id="KW-1015">Disulfide bond</keyword>
<keyword id="KW-0274">FAD</keyword>
<keyword id="KW-0285">Flavoprotein</keyword>
<keyword id="KW-0325">Glycoprotein</keyword>
<keyword id="KW-0547">Nucleotide-binding</keyword>
<keyword id="KW-0560">Oxidoreductase</keyword>
<keyword id="KW-1185">Reference proteome</keyword>
<keyword id="KW-0964">Secreted</keyword>
<keyword id="KW-0732">Signal</keyword>
<feature type="signal peptide" evidence="2">
    <location>
        <begin position="1"/>
        <end position="20"/>
    </location>
</feature>
<feature type="chain" id="PRO_5008180355" description="Berberine bridge enzyme-like 2">
    <location>
        <begin position="21"/>
        <end position="536"/>
    </location>
</feature>
<feature type="domain" description="FAD-binding PCMH-type" evidence="4">
    <location>
        <begin position="76"/>
        <end position="250"/>
    </location>
</feature>
<feature type="glycosylation site" description="N-linked (GlcNAc...) asparagine" evidence="3">
    <location>
        <position position="38"/>
    </location>
</feature>
<feature type="glycosylation site" description="N-linked (GlcNAc...) asparagine" evidence="3">
    <location>
        <position position="73"/>
    </location>
</feature>
<feature type="glycosylation site" description="N-linked (GlcNAc...) asparagine" evidence="3">
    <location>
        <position position="136"/>
    </location>
</feature>
<feature type="glycosylation site" description="N-linked (GlcNAc...) asparagine" evidence="3">
    <location>
        <position position="266"/>
    </location>
</feature>
<feature type="glycosylation site" description="N-linked (GlcNAc...) asparagine" evidence="3">
    <location>
        <position position="334"/>
    </location>
</feature>
<feature type="glycosylation site" description="N-linked (GlcNAc...) asparagine" evidence="3">
    <location>
        <position position="352"/>
    </location>
</feature>
<feature type="disulfide bond" evidence="1">
    <location>
        <begin position="35"/>
        <end position="98"/>
    </location>
</feature>
<feature type="cross-link" description="6-(S-cysteinyl)-8alpha-(pros-histidyl)-FAD (His-Cys)" evidence="1">
    <location>
        <begin position="113"/>
        <end position="175"/>
    </location>
</feature>
<feature type="sequence conflict" description="In Ref. 3; BAC42794." evidence="6" ref="3">
    <original>D</original>
    <variation>G</variation>
    <location>
        <position position="522"/>
    </location>
</feature>
<feature type="sequence conflict" description="In Ref. 3; BAC42794." evidence="6" ref="3">
    <original>R</original>
    <variation>C</variation>
    <location>
        <position position="536"/>
    </location>
</feature>